<dbReference type="EC" id="2.3.1.117" evidence="1"/>
<dbReference type="EMBL" id="CP001196">
    <property type="protein sequence ID" value="ACI94637.1"/>
    <property type="molecule type" value="Genomic_DNA"/>
</dbReference>
<dbReference type="EMBL" id="CP002826">
    <property type="protein sequence ID" value="AEI05329.1"/>
    <property type="molecule type" value="Genomic_DNA"/>
</dbReference>
<dbReference type="RefSeq" id="WP_012564661.1">
    <property type="nucleotide sequence ID" value="NC_015684.1"/>
</dbReference>
<dbReference type="SMR" id="B6JJP3"/>
<dbReference type="STRING" id="504832.OCA5_c06050"/>
<dbReference type="KEGG" id="oca:OCAR_7535"/>
<dbReference type="KEGG" id="ocg:OCA5_c06050"/>
<dbReference type="PATRIC" id="fig|504832.7.peg.633"/>
<dbReference type="eggNOG" id="COG2171">
    <property type="taxonomic scope" value="Bacteria"/>
</dbReference>
<dbReference type="HOGENOM" id="CLU_050859_0_1_5"/>
<dbReference type="OrthoDB" id="9775362at2"/>
<dbReference type="UniPathway" id="UPA00034">
    <property type="reaction ID" value="UER00019"/>
</dbReference>
<dbReference type="Proteomes" id="UP000007730">
    <property type="component" value="Chromosome"/>
</dbReference>
<dbReference type="GO" id="GO:0005737">
    <property type="term" value="C:cytoplasm"/>
    <property type="evidence" value="ECO:0007669"/>
    <property type="project" value="UniProtKB-SubCell"/>
</dbReference>
<dbReference type="GO" id="GO:0008666">
    <property type="term" value="F:2,3,4,5-tetrahydropyridine-2,6-dicarboxylate N-succinyltransferase activity"/>
    <property type="evidence" value="ECO:0007669"/>
    <property type="project" value="UniProtKB-UniRule"/>
</dbReference>
<dbReference type="GO" id="GO:0016779">
    <property type="term" value="F:nucleotidyltransferase activity"/>
    <property type="evidence" value="ECO:0007669"/>
    <property type="project" value="TreeGrafter"/>
</dbReference>
<dbReference type="GO" id="GO:0019877">
    <property type="term" value="P:diaminopimelate biosynthetic process"/>
    <property type="evidence" value="ECO:0007669"/>
    <property type="project" value="UniProtKB-UniRule"/>
</dbReference>
<dbReference type="GO" id="GO:0009089">
    <property type="term" value="P:lysine biosynthetic process via diaminopimelate"/>
    <property type="evidence" value="ECO:0007669"/>
    <property type="project" value="UniProtKB-UniRule"/>
</dbReference>
<dbReference type="CDD" id="cd03350">
    <property type="entry name" value="LbH_THP_succinylT"/>
    <property type="match status" value="1"/>
</dbReference>
<dbReference type="Gene3D" id="2.160.10.10">
    <property type="entry name" value="Hexapeptide repeat proteins"/>
    <property type="match status" value="1"/>
</dbReference>
<dbReference type="Gene3D" id="1.10.166.10">
    <property type="entry name" value="Tetrahydrodipicolinate-N-succinyltransferase, N-terminal domain"/>
    <property type="match status" value="1"/>
</dbReference>
<dbReference type="HAMAP" id="MF_00811">
    <property type="entry name" value="DapD"/>
    <property type="match status" value="1"/>
</dbReference>
<dbReference type="InterPro" id="IPR005664">
    <property type="entry name" value="DapD_Trfase_Hexpep_rpt_fam"/>
</dbReference>
<dbReference type="InterPro" id="IPR001451">
    <property type="entry name" value="Hexapep"/>
</dbReference>
<dbReference type="InterPro" id="IPR023180">
    <property type="entry name" value="THP_succinylTrfase_dom1"/>
</dbReference>
<dbReference type="InterPro" id="IPR037133">
    <property type="entry name" value="THP_succinylTrfase_N_sf"/>
</dbReference>
<dbReference type="InterPro" id="IPR011004">
    <property type="entry name" value="Trimer_LpxA-like_sf"/>
</dbReference>
<dbReference type="NCBIfam" id="TIGR00965">
    <property type="entry name" value="dapD"/>
    <property type="match status" value="1"/>
</dbReference>
<dbReference type="NCBIfam" id="NF008808">
    <property type="entry name" value="PRK11830.1"/>
    <property type="match status" value="1"/>
</dbReference>
<dbReference type="PANTHER" id="PTHR19136:SF52">
    <property type="entry name" value="2,3,4,5-TETRAHYDROPYRIDINE-2,6-DICARBOXYLATE N-SUCCINYLTRANSFERASE"/>
    <property type="match status" value="1"/>
</dbReference>
<dbReference type="PANTHER" id="PTHR19136">
    <property type="entry name" value="MOLYBDENUM COFACTOR GUANYLYLTRANSFERASE"/>
    <property type="match status" value="1"/>
</dbReference>
<dbReference type="Pfam" id="PF14602">
    <property type="entry name" value="Hexapep_2"/>
    <property type="match status" value="1"/>
</dbReference>
<dbReference type="Pfam" id="PF14805">
    <property type="entry name" value="THDPS_N_2"/>
    <property type="match status" value="1"/>
</dbReference>
<dbReference type="SUPFAM" id="SSF51161">
    <property type="entry name" value="Trimeric LpxA-like enzymes"/>
    <property type="match status" value="1"/>
</dbReference>
<evidence type="ECO:0000255" key="1">
    <source>
        <dbReference type="HAMAP-Rule" id="MF_00811"/>
    </source>
</evidence>
<organism>
    <name type="scientific">Afipia carboxidovorans (strain ATCC 49405 / DSM 1227 / KCTC 32145 / OM5)</name>
    <name type="common">Oligotropha carboxidovorans</name>
    <dbReference type="NCBI Taxonomy" id="504832"/>
    <lineage>
        <taxon>Bacteria</taxon>
        <taxon>Pseudomonadati</taxon>
        <taxon>Pseudomonadota</taxon>
        <taxon>Alphaproteobacteria</taxon>
        <taxon>Hyphomicrobiales</taxon>
        <taxon>Nitrobacteraceae</taxon>
        <taxon>Afipia</taxon>
    </lineage>
</organism>
<comment type="catalytic activity">
    <reaction evidence="1">
        <text>(S)-2,3,4,5-tetrahydrodipicolinate + succinyl-CoA + H2O = (S)-2-succinylamino-6-oxoheptanedioate + CoA</text>
        <dbReference type="Rhea" id="RHEA:17325"/>
        <dbReference type="ChEBI" id="CHEBI:15377"/>
        <dbReference type="ChEBI" id="CHEBI:15685"/>
        <dbReference type="ChEBI" id="CHEBI:16845"/>
        <dbReference type="ChEBI" id="CHEBI:57287"/>
        <dbReference type="ChEBI" id="CHEBI:57292"/>
        <dbReference type="EC" id="2.3.1.117"/>
    </reaction>
</comment>
<comment type="pathway">
    <text evidence="1">Amino-acid biosynthesis; L-lysine biosynthesis via DAP pathway; LL-2,6-diaminopimelate from (S)-tetrahydrodipicolinate (succinylase route): step 1/3.</text>
</comment>
<comment type="subcellular location">
    <subcellularLocation>
        <location evidence="1">Cytoplasm</location>
    </subcellularLocation>
</comment>
<comment type="similarity">
    <text evidence="1">Belongs to the transferase hexapeptide repeat family.</text>
</comment>
<proteinExistence type="inferred from homology"/>
<keyword id="KW-0012">Acyltransferase</keyword>
<keyword id="KW-0028">Amino-acid biosynthesis</keyword>
<keyword id="KW-0963">Cytoplasm</keyword>
<keyword id="KW-0220">Diaminopimelate biosynthesis</keyword>
<keyword id="KW-0457">Lysine biosynthesis</keyword>
<keyword id="KW-1185">Reference proteome</keyword>
<keyword id="KW-0677">Repeat</keyword>
<keyword id="KW-0808">Transferase</keyword>
<accession>B6JJP3</accession>
<accession>F8BWX7</accession>
<protein>
    <recommendedName>
        <fullName evidence="1">2,3,4,5-tetrahydropyridine-2,6-dicarboxylate N-succinyltransferase</fullName>
        <ecNumber evidence="1">2.3.1.117</ecNumber>
    </recommendedName>
    <alternativeName>
        <fullName evidence="1">Tetrahydrodipicolinate N-succinyltransferase</fullName>
        <shortName evidence="1">THP succinyltransferase</shortName>
        <shortName evidence="1">Tetrahydropicolinate succinylase</shortName>
    </alternativeName>
</protein>
<feature type="chain" id="PRO_1000134057" description="2,3,4,5-tetrahydropyridine-2,6-dicarboxylate N-succinyltransferase">
    <location>
        <begin position="1"/>
        <end position="281"/>
    </location>
</feature>
<name>DAPD_AFIC5</name>
<sequence>MSLSALETTLNTAFDARDSITAATKGEVRDAVELALDLLDKGEARVAEPQADGAWKINQWLKKAVLISFRLNDMAPIPGGPGGAQWWDKVPSKLENYSEQKFREAGFRAVPGAIVRRSAFIAKNVVLMPSFVNLGAYVDEATMIDTWSTVGSCAQIGKHVHISGGVGIGGVLEPLQAGPVIIEDNCFIGARSEVAEGVIVRKGAVLSMGVFIGASTRIIDRATGEVYIGEVPAYSVVVPGSMPGKPLPDGSPGPSLYCAVIVKRVDEKTRSKTSINELLRE</sequence>
<gene>
    <name evidence="1" type="primary">dapD</name>
    <name type="ordered locus">OCAR_7535</name>
    <name type="ordered locus">OCA5_c06050</name>
</gene>
<reference key="1">
    <citation type="journal article" date="2008" name="J. Bacteriol.">
        <title>Genome sequence of the chemolithoautotrophic bacterium Oligotropha carboxidovorans OM5T.</title>
        <authorList>
            <person name="Paul D."/>
            <person name="Bridges S."/>
            <person name="Burgess S.C."/>
            <person name="Dandass Y."/>
            <person name="Lawrence M.L."/>
        </authorList>
    </citation>
    <scope>NUCLEOTIDE SEQUENCE [LARGE SCALE GENOMIC DNA]</scope>
    <source>
        <strain>ATCC 49405 / DSM 1227 / KCTC 32145 / OM5</strain>
    </source>
</reference>
<reference key="2">
    <citation type="journal article" date="2011" name="J. Bacteriol.">
        <title>Complete genome sequences of the chemolithoautotrophic Oligotropha carboxidovorans strains OM4 and OM5.</title>
        <authorList>
            <person name="Volland S."/>
            <person name="Rachinger M."/>
            <person name="Strittmatter A."/>
            <person name="Daniel R."/>
            <person name="Gottschalk G."/>
            <person name="Meyer O."/>
        </authorList>
    </citation>
    <scope>NUCLEOTIDE SEQUENCE [LARGE SCALE GENOMIC DNA]</scope>
    <source>
        <strain>ATCC 49405 / DSM 1227 / KCTC 32145 / OM5</strain>
    </source>
</reference>